<gene>
    <name type="primary">argS</name>
    <name type="ordered locus">MT1331</name>
</gene>
<accession>P9WFW4</accession>
<accession>L0T8Y6</accession>
<accession>P67569</accession>
<accession>Q10609</accession>
<sequence length="550" mass="59709">MTPADLAELLKATAAAVLAERGLDASALPQMVTVERPRIPEHGDYASNLAMQLAKKVGTNPRELAGWLAEALTKVDGIASAEVAGPGFINMRLETAAQAKVVTSVIDAGHSYGHSLLLAGRKVNLEFVSANPTGPIHIGGTRWAAVGDALGRLLTTQGADVVREYYFNDHGAQIDRFANSLIAAAKGEPTPQDGYAGSYITNIAEQVLQKAPDALSLPDAELRETFRAIGVDLMFDHIKQSLHEFGTDFDVYTHEDSMHTGGRVENAIARLRETGNIYEKDGATWLRTSAFGDDKDRVVIKSDGKPAYIAGDLAYYLDKRQRGFDLCIYMLGADHHGYIARLKAAAAAFGDDPATVEVLIGQMVNLVRDGQPVRMSKRAGTVLTLDDLVEAIGVDAARYSLIRSSVDTAIDIDLALWSSASNENPVYYVQYAHARLSALARNAAELALIPDTNHLELLNHDKEGTLLRTLGEFPRVLETAASLREPHRVCRYLEDLAGDYHRFYDSCRVLPQGDEQPTDLHTARLALCQATRQVIANGLAIIGVTAPERM</sequence>
<dbReference type="EC" id="6.1.1.19"/>
<dbReference type="EMBL" id="AE000516">
    <property type="protein sequence ID" value="AAK45593.1"/>
    <property type="molecule type" value="Genomic_DNA"/>
</dbReference>
<dbReference type="PIR" id="H70772">
    <property type="entry name" value="H70772"/>
</dbReference>
<dbReference type="RefSeq" id="WP_003406630.1">
    <property type="nucleotide sequence ID" value="NZ_KK341227.1"/>
</dbReference>
<dbReference type="SMR" id="P9WFW4"/>
<dbReference type="KEGG" id="mtc:MT1331"/>
<dbReference type="PATRIC" id="fig|83331.31.peg.1437"/>
<dbReference type="HOGENOM" id="CLU_006406_0_1_11"/>
<dbReference type="Proteomes" id="UP000001020">
    <property type="component" value="Chromosome"/>
</dbReference>
<dbReference type="GO" id="GO:0005737">
    <property type="term" value="C:cytoplasm"/>
    <property type="evidence" value="ECO:0007669"/>
    <property type="project" value="UniProtKB-SubCell"/>
</dbReference>
<dbReference type="GO" id="GO:0004814">
    <property type="term" value="F:arginine-tRNA ligase activity"/>
    <property type="evidence" value="ECO:0007669"/>
    <property type="project" value="UniProtKB-UniRule"/>
</dbReference>
<dbReference type="GO" id="GO:0005524">
    <property type="term" value="F:ATP binding"/>
    <property type="evidence" value="ECO:0007669"/>
    <property type="project" value="UniProtKB-UniRule"/>
</dbReference>
<dbReference type="GO" id="GO:0006420">
    <property type="term" value="P:arginyl-tRNA aminoacylation"/>
    <property type="evidence" value="ECO:0007669"/>
    <property type="project" value="UniProtKB-UniRule"/>
</dbReference>
<dbReference type="CDD" id="cd07956">
    <property type="entry name" value="Anticodon_Ia_Arg"/>
    <property type="match status" value="1"/>
</dbReference>
<dbReference type="CDD" id="cd00671">
    <property type="entry name" value="ArgRS_core"/>
    <property type="match status" value="1"/>
</dbReference>
<dbReference type="FunFam" id="1.10.730.10:FF:000008">
    <property type="entry name" value="Arginine--tRNA ligase"/>
    <property type="match status" value="1"/>
</dbReference>
<dbReference type="FunFam" id="3.30.1360.70:FF:000003">
    <property type="entry name" value="Arginine--tRNA ligase"/>
    <property type="match status" value="1"/>
</dbReference>
<dbReference type="FunFam" id="3.40.50.620:FF:000062">
    <property type="entry name" value="Arginine--tRNA ligase"/>
    <property type="match status" value="1"/>
</dbReference>
<dbReference type="Gene3D" id="3.30.1360.70">
    <property type="entry name" value="Arginyl tRNA synthetase N-terminal domain"/>
    <property type="match status" value="1"/>
</dbReference>
<dbReference type="Gene3D" id="3.40.50.620">
    <property type="entry name" value="HUPs"/>
    <property type="match status" value="1"/>
</dbReference>
<dbReference type="Gene3D" id="1.10.730.10">
    <property type="entry name" value="Isoleucyl-tRNA Synthetase, Domain 1"/>
    <property type="match status" value="1"/>
</dbReference>
<dbReference type="HAMAP" id="MF_00123">
    <property type="entry name" value="Arg_tRNA_synth"/>
    <property type="match status" value="1"/>
</dbReference>
<dbReference type="InterPro" id="IPR001412">
    <property type="entry name" value="aa-tRNA-synth_I_CS"/>
</dbReference>
<dbReference type="InterPro" id="IPR001278">
    <property type="entry name" value="Arg-tRNA-ligase"/>
</dbReference>
<dbReference type="InterPro" id="IPR005148">
    <property type="entry name" value="Arg-tRNA-synth_N"/>
</dbReference>
<dbReference type="InterPro" id="IPR036695">
    <property type="entry name" value="Arg-tRNA-synth_N_sf"/>
</dbReference>
<dbReference type="InterPro" id="IPR035684">
    <property type="entry name" value="ArgRS_core"/>
</dbReference>
<dbReference type="InterPro" id="IPR008909">
    <property type="entry name" value="DALR_anticod-bd"/>
</dbReference>
<dbReference type="InterPro" id="IPR014729">
    <property type="entry name" value="Rossmann-like_a/b/a_fold"/>
</dbReference>
<dbReference type="InterPro" id="IPR009080">
    <property type="entry name" value="tRNAsynth_Ia_anticodon-bd"/>
</dbReference>
<dbReference type="NCBIfam" id="TIGR00456">
    <property type="entry name" value="argS"/>
    <property type="match status" value="1"/>
</dbReference>
<dbReference type="PANTHER" id="PTHR11956:SF5">
    <property type="entry name" value="ARGININE--TRNA LIGASE, CYTOPLASMIC"/>
    <property type="match status" value="1"/>
</dbReference>
<dbReference type="PANTHER" id="PTHR11956">
    <property type="entry name" value="ARGINYL-TRNA SYNTHETASE"/>
    <property type="match status" value="1"/>
</dbReference>
<dbReference type="Pfam" id="PF03485">
    <property type="entry name" value="Arg_tRNA_synt_N"/>
    <property type="match status" value="1"/>
</dbReference>
<dbReference type="Pfam" id="PF05746">
    <property type="entry name" value="DALR_1"/>
    <property type="match status" value="1"/>
</dbReference>
<dbReference type="Pfam" id="PF00750">
    <property type="entry name" value="tRNA-synt_1d"/>
    <property type="match status" value="1"/>
</dbReference>
<dbReference type="PRINTS" id="PR01038">
    <property type="entry name" value="TRNASYNTHARG"/>
</dbReference>
<dbReference type="SMART" id="SM01016">
    <property type="entry name" value="Arg_tRNA_synt_N"/>
    <property type="match status" value="1"/>
</dbReference>
<dbReference type="SMART" id="SM00836">
    <property type="entry name" value="DALR_1"/>
    <property type="match status" value="1"/>
</dbReference>
<dbReference type="SUPFAM" id="SSF47323">
    <property type="entry name" value="Anticodon-binding domain of a subclass of class I aminoacyl-tRNA synthetases"/>
    <property type="match status" value="1"/>
</dbReference>
<dbReference type="SUPFAM" id="SSF55190">
    <property type="entry name" value="Arginyl-tRNA synthetase (ArgRS), N-terminal 'additional' domain"/>
    <property type="match status" value="1"/>
</dbReference>
<dbReference type="SUPFAM" id="SSF52374">
    <property type="entry name" value="Nucleotidylyl transferase"/>
    <property type="match status" value="1"/>
</dbReference>
<dbReference type="PROSITE" id="PS00178">
    <property type="entry name" value="AA_TRNA_LIGASE_I"/>
    <property type="match status" value="1"/>
</dbReference>
<evidence type="ECO:0000250" key="1"/>
<evidence type="ECO:0000305" key="2"/>
<keyword id="KW-0030">Aminoacyl-tRNA synthetase</keyword>
<keyword id="KW-0067">ATP-binding</keyword>
<keyword id="KW-0963">Cytoplasm</keyword>
<keyword id="KW-0436">Ligase</keyword>
<keyword id="KW-0547">Nucleotide-binding</keyword>
<keyword id="KW-0648">Protein biosynthesis</keyword>
<keyword id="KW-1185">Reference proteome</keyword>
<name>SYR_MYCTO</name>
<proteinExistence type="inferred from homology"/>
<feature type="chain" id="PRO_0000428466" description="Arginine--tRNA ligase">
    <location>
        <begin position="1"/>
        <end position="550"/>
    </location>
</feature>
<feature type="short sequence motif" description="'HIGH' region">
    <location>
        <begin position="130"/>
        <end position="140"/>
    </location>
</feature>
<comment type="catalytic activity">
    <reaction>
        <text>tRNA(Arg) + L-arginine + ATP = L-arginyl-tRNA(Arg) + AMP + diphosphate</text>
        <dbReference type="Rhea" id="RHEA:20301"/>
        <dbReference type="Rhea" id="RHEA-COMP:9658"/>
        <dbReference type="Rhea" id="RHEA-COMP:9673"/>
        <dbReference type="ChEBI" id="CHEBI:30616"/>
        <dbReference type="ChEBI" id="CHEBI:32682"/>
        <dbReference type="ChEBI" id="CHEBI:33019"/>
        <dbReference type="ChEBI" id="CHEBI:78442"/>
        <dbReference type="ChEBI" id="CHEBI:78513"/>
        <dbReference type="ChEBI" id="CHEBI:456215"/>
        <dbReference type="EC" id="6.1.1.19"/>
    </reaction>
</comment>
<comment type="subunit">
    <text evidence="1">Monomer.</text>
</comment>
<comment type="subcellular location">
    <subcellularLocation>
        <location evidence="1">Cytoplasm</location>
    </subcellularLocation>
</comment>
<comment type="similarity">
    <text evidence="2">Belongs to the class-I aminoacyl-tRNA synthetase family.</text>
</comment>
<protein>
    <recommendedName>
        <fullName>Arginine--tRNA ligase</fullName>
        <ecNumber>6.1.1.19</ecNumber>
    </recommendedName>
    <alternativeName>
        <fullName>Arginyl-tRNA synthetase</fullName>
        <shortName>ArgRS</shortName>
    </alternativeName>
</protein>
<organism>
    <name type="scientific">Mycobacterium tuberculosis (strain CDC 1551 / Oshkosh)</name>
    <dbReference type="NCBI Taxonomy" id="83331"/>
    <lineage>
        <taxon>Bacteria</taxon>
        <taxon>Bacillati</taxon>
        <taxon>Actinomycetota</taxon>
        <taxon>Actinomycetes</taxon>
        <taxon>Mycobacteriales</taxon>
        <taxon>Mycobacteriaceae</taxon>
        <taxon>Mycobacterium</taxon>
        <taxon>Mycobacterium tuberculosis complex</taxon>
    </lineage>
</organism>
<reference key="1">
    <citation type="journal article" date="2002" name="J. Bacteriol.">
        <title>Whole-genome comparison of Mycobacterium tuberculosis clinical and laboratory strains.</title>
        <authorList>
            <person name="Fleischmann R.D."/>
            <person name="Alland D."/>
            <person name="Eisen J.A."/>
            <person name="Carpenter L."/>
            <person name="White O."/>
            <person name="Peterson J.D."/>
            <person name="DeBoy R.T."/>
            <person name="Dodson R.J."/>
            <person name="Gwinn M.L."/>
            <person name="Haft D.H."/>
            <person name="Hickey E.K."/>
            <person name="Kolonay J.F."/>
            <person name="Nelson W.C."/>
            <person name="Umayam L.A."/>
            <person name="Ermolaeva M.D."/>
            <person name="Salzberg S.L."/>
            <person name="Delcher A."/>
            <person name="Utterback T.R."/>
            <person name="Weidman J.F."/>
            <person name="Khouri H.M."/>
            <person name="Gill J."/>
            <person name="Mikula A."/>
            <person name="Bishai W."/>
            <person name="Jacobs W.R. Jr."/>
            <person name="Venter J.C."/>
            <person name="Fraser C.M."/>
        </authorList>
    </citation>
    <scope>NUCLEOTIDE SEQUENCE [LARGE SCALE GENOMIC DNA]</scope>
    <source>
        <strain>CDC 1551 / Oshkosh</strain>
    </source>
</reference>